<name>GD_HHV1A</name>
<dbReference type="EMBL" id="X54361">
    <property type="protein sequence ID" value="CAA38245.1"/>
    <property type="molecule type" value="Genomic_DNA"/>
</dbReference>
<dbReference type="PIR" id="A47627">
    <property type="entry name" value="A47627"/>
</dbReference>
<dbReference type="SMR" id="P36318"/>
<dbReference type="GlyCosmos" id="P36318">
    <property type="glycosylation" value="3 sites, No reported glycans"/>
</dbReference>
<dbReference type="GO" id="GO:0044177">
    <property type="term" value="C:host cell Golgi apparatus"/>
    <property type="evidence" value="ECO:0007669"/>
    <property type="project" value="UniProtKB-SubCell"/>
</dbReference>
<dbReference type="GO" id="GO:0016020">
    <property type="term" value="C:membrane"/>
    <property type="evidence" value="ECO:0007669"/>
    <property type="project" value="UniProtKB-KW"/>
</dbReference>
<dbReference type="GO" id="GO:0019031">
    <property type="term" value="C:viral envelope"/>
    <property type="evidence" value="ECO:0007669"/>
    <property type="project" value="UniProtKB-KW"/>
</dbReference>
<dbReference type="GO" id="GO:0055036">
    <property type="term" value="C:virion membrane"/>
    <property type="evidence" value="ECO:0007669"/>
    <property type="project" value="UniProtKB-SubCell"/>
</dbReference>
<dbReference type="GO" id="GO:0046872">
    <property type="term" value="F:metal ion binding"/>
    <property type="evidence" value="ECO:0007669"/>
    <property type="project" value="UniProtKB-KW"/>
</dbReference>
<dbReference type="GO" id="GO:0098670">
    <property type="term" value="P:entry receptor-mediated virion attachment to host cell"/>
    <property type="evidence" value="ECO:0007669"/>
    <property type="project" value="UniProtKB-KW"/>
</dbReference>
<dbReference type="GO" id="GO:0046718">
    <property type="term" value="P:symbiont entry into host cell"/>
    <property type="evidence" value="ECO:0007669"/>
    <property type="project" value="UniProtKB-KW"/>
</dbReference>
<dbReference type="CDD" id="cd12087">
    <property type="entry name" value="TM_EGFR-like"/>
    <property type="match status" value="1"/>
</dbReference>
<dbReference type="FunFam" id="2.70.230.10:FF:000001">
    <property type="entry name" value="Envelope glycoprotein D"/>
    <property type="match status" value="1"/>
</dbReference>
<dbReference type="Gene3D" id="2.70.230.10">
    <property type="match status" value="1"/>
</dbReference>
<dbReference type="InterPro" id="IPR002896">
    <property type="entry name" value="Herpes_glycop_dom"/>
</dbReference>
<dbReference type="InterPro" id="IPR036179">
    <property type="entry name" value="Ig-like_dom_sf"/>
</dbReference>
<dbReference type="Pfam" id="PF01537">
    <property type="entry name" value="Herpes_glycop_D"/>
    <property type="match status" value="1"/>
</dbReference>
<dbReference type="SUPFAM" id="SSF48726">
    <property type="entry name" value="Immunoglobulin"/>
    <property type="match status" value="1"/>
</dbReference>
<sequence length="394" mass="43304">MGGAAARLGAVILFVVIVGLHGVRGKYALADASLKMADPNRFRGKDLPVPDRLTDPPGVRRVYHIQAGLPDPFQPPSLPITVYYAVLERACRSVLLNAPSEAPQIVRGGSEDVRKQPYNLTIAWFRMGGNCAIPITVMEYTECSYNKSLGACPIRTQPRWNYYDSFSAVSEDNLGFLMHAPAFETAGTYLRLVKINDWTEITQFILEHRAKGSCKYALPLRIPPSACLSPQAYQQGVTVDSIGMLPRFIPENQRIVAVYSLKIAGWHGPKAPYTSTLLPPELSETPNATQPELAPEDPEDSALLEDPVGTVAPQIPPNWHIPSIQDAATPYHPPATPNNMGLIAGAVGGSLLAALVICGIVYWMRRRTQKGPKRIRLPHIREDDQPSSHQPLFY</sequence>
<comment type="function">
    <text evidence="2">Envelope glycoprotein that binds to the host cell entry receptors NECTIN1, TNFRSF14/HVEM and 3-O-sulfated heparan sulfate, promoting the virus entry into host cells. May trigger fusion with host membrane, by recruiting the fusion machinery composed of gB and gH/gL (By similarity).</text>
</comment>
<comment type="subunit">
    <text evidence="2 3">Homodimer (By similarity). Interacts with host receptor TNFRSF14. Interacts with host receptor NECTIN1. Interacts (via profusion domain) with gB; this interaction occurs in the absence of gH/gL. Interacts (via profusion domain) with gH/gL heterodimer; this interaction occurs in the absence of gB. Associates with the gB-gH/gL-gD complex. Interacts (via C-terminus) with UL11 tegument protein (By similarity). Interacts with host RSAD2 (By similarity).</text>
</comment>
<comment type="subcellular location">
    <subcellularLocation>
        <location evidence="2">Virion membrane</location>
        <topology evidence="2">Single-pass type I membrane protein</topology>
    </subcellularLocation>
    <subcellularLocation>
        <location evidence="3">Host Golgi apparatus</location>
    </subcellularLocation>
    <text evidence="3">During virion morphogenesis, this protein probably accumulates in the endosomes and trans-Golgi where secondary envelopment occurs.</text>
</comment>
<comment type="similarity">
    <text evidence="6">Belongs to the herpesviridae glycoprotein D family.</text>
</comment>
<evidence type="ECO:0000250" key="1">
    <source>
        <dbReference type="UniProtKB" id="P57083"/>
    </source>
</evidence>
<evidence type="ECO:0000250" key="2">
    <source>
        <dbReference type="UniProtKB" id="Q05059"/>
    </source>
</evidence>
<evidence type="ECO:0000250" key="3">
    <source>
        <dbReference type="UniProtKB" id="Q69091"/>
    </source>
</evidence>
<evidence type="ECO:0000255" key="4"/>
<evidence type="ECO:0000256" key="5">
    <source>
        <dbReference type="SAM" id="MobiDB-lite"/>
    </source>
</evidence>
<evidence type="ECO:0000305" key="6"/>
<reference key="1">
    <citation type="journal article" date="1990" name="J. Exp. Med.">
        <title>Molecular and biological characterization of a herpes simplex virus type 1 (HSV-1) neuroinvasiveness gene.</title>
        <authorList>
            <person name="Izumi K.M."/>
            <person name="Stevens J.G."/>
        </authorList>
    </citation>
    <scope>NUCLEOTIDE SEQUENCE [GENOMIC DNA]</scope>
</reference>
<gene>
    <name type="primary">gD</name>
    <name type="synonym">US6</name>
</gene>
<organismHost>
    <name type="scientific">Homo sapiens</name>
    <name type="common">Human</name>
    <dbReference type="NCBI Taxonomy" id="9606"/>
</organismHost>
<protein>
    <recommendedName>
        <fullName>Envelope glycoprotein D</fullName>
        <shortName>gD</shortName>
    </recommendedName>
</protein>
<proteinExistence type="inferred from homology"/>
<keyword id="KW-1015">Disulfide bond</keyword>
<keyword id="KW-0325">Glycoprotein</keyword>
<keyword id="KW-1040">Host Golgi apparatus</keyword>
<keyword id="KW-0945">Host-virus interaction</keyword>
<keyword id="KW-0472">Membrane</keyword>
<keyword id="KW-0479">Metal-binding</keyword>
<keyword id="KW-0732">Signal</keyword>
<keyword id="KW-0812">Transmembrane</keyword>
<keyword id="KW-1133">Transmembrane helix</keyword>
<keyword id="KW-1161">Viral attachment to host cell</keyword>
<keyword id="KW-1234">Viral attachment to host entry receptor</keyword>
<keyword id="KW-0261">Viral envelope protein</keyword>
<keyword id="KW-0946">Virion</keyword>
<keyword id="KW-1160">Virus entry into host cell</keyword>
<keyword id="KW-0862">Zinc</keyword>
<organism>
    <name type="scientific">Human herpesvirus 1 (strain Angelotti)</name>
    <name type="common">HHV-1</name>
    <name type="synonym">Human herpes simplex virus 1</name>
    <dbReference type="NCBI Taxonomy" id="10301"/>
    <lineage>
        <taxon>Viruses</taxon>
        <taxon>Duplodnaviria</taxon>
        <taxon>Heunggongvirae</taxon>
        <taxon>Peploviricota</taxon>
        <taxon>Herviviricetes</taxon>
        <taxon>Herpesvirales</taxon>
        <taxon>Orthoherpesviridae</taxon>
        <taxon>Alphaherpesvirinae</taxon>
        <taxon>Simplexvirus</taxon>
        <taxon>Simplexvirus humanalpha1</taxon>
        <taxon>Human herpesvirus 1</taxon>
    </lineage>
</organism>
<accession>P36318</accession>
<feature type="signal peptide" evidence="4">
    <location>
        <begin position="1"/>
        <end position="25"/>
    </location>
</feature>
<feature type="chain" id="PRO_0000038215" description="Envelope glycoprotein D">
    <location>
        <begin position="26"/>
        <end position="394"/>
    </location>
</feature>
<feature type="topological domain" description="Virion surface" evidence="4">
    <location>
        <begin position="26"/>
        <end position="339"/>
    </location>
</feature>
<feature type="transmembrane region" description="Helical" evidence="4">
    <location>
        <begin position="340"/>
        <end position="364"/>
    </location>
</feature>
<feature type="topological domain" description="Intravirion" evidence="4">
    <location>
        <begin position="365"/>
        <end position="394"/>
    </location>
</feature>
<feature type="region of interest" description="Interaction with TNFRSF14" evidence="1">
    <location>
        <begin position="25"/>
        <end position="57"/>
    </location>
</feature>
<feature type="region of interest" description="Profusion" evidence="2">
    <location>
        <begin position="261"/>
        <end position="305"/>
    </location>
</feature>
<feature type="region of interest" description="Disordered" evidence="5">
    <location>
        <begin position="275"/>
        <end position="301"/>
    </location>
</feature>
<feature type="region of interest" description="Disordered" evidence="5">
    <location>
        <begin position="374"/>
        <end position="394"/>
    </location>
</feature>
<feature type="binding site" evidence="1">
    <location>
        <position position="64"/>
    </location>
    <ligand>
        <name>Zn(2+)</name>
        <dbReference type="ChEBI" id="CHEBI:29105"/>
        <note>ligand shared between dimeric partners</note>
    </ligand>
</feature>
<feature type="binding site" evidence="1">
    <location>
        <position position="240"/>
    </location>
    <ligand>
        <name>Zn(2+)</name>
        <dbReference type="ChEBI" id="CHEBI:29105"/>
        <note>ligand shared between dimeric partners</note>
    </ligand>
</feature>
<feature type="glycosylation site" description="N-linked (GlcNAc...) asparagine; by host" evidence="4">
    <location>
        <position position="119"/>
    </location>
</feature>
<feature type="glycosylation site" description="N-linked (GlcNAc...) asparagine; by host" evidence="4">
    <location>
        <position position="146"/>
    </location>
</feature>
<feature type="glycosylation site" description="N-linked (GlcNAc...) asparagine; by host" evidence="4">
    <location>
        <position position="287"/>
    </location>
</feature>
<feature type="disulfide bond" evidence="1">
    <location>
        <begin position="91"/>
        <end position="214"/>
    </location>
</feature>
<feature type="disulfide bond" evidence="1">
    <location>
        <begin position="131"/>
        <end position="227"/>
    </location>
</feature>
<feature type="disulfide bond" evidence="1">
    <location>
        <begin position="143"/>
        <end position="152"/>
    </location>
</feature>